<accession>A1VX79</accession>
<organism>
    <name type="scientific">Campylobacter jejuni subsp. jejuni serotype O:23/36 (strain 81-176)</name>
    <dbReference type="NCBI Taxonomy" id="354242"/>
    <lineage>
        <taxon>Bacteria</taxon>
        <taxon>Pseudomonadati</taxon>
        <taxon>Campylobacterota</taxon>
        <taxon>Epsilonproteobacteria</taxon>
        <taxon>Campylobacterales</taxon>
        <taxon>Campylobacteraceae</taxon>
        <taxon>Campylobacter</taxon>
    </lineage>
</organism>
<name>DNAA_CAMJJ</name>
<sequence length="440" mass="49729">MNPSQILENLKKELNENEYENYLSNLKFNEKQSKADLLVFNAPNELMAKFIQTKYGKKIAHFYEVQSGNKAIINIQAQSAKQSNKSTKIDIAHIKAQSTILNPSFTFDSFVVGDSNKYAYGACKAITHKDKLGKLYNPIFVYGPTGLGKTHLLQAVGNASLEMGKKVIYATSENFINDFTSNLKNGSLDKFHEKYRNCDVLLIDDVQFLGKTDKIQEEFFFIFNEIKNNDGQIIMTSDNPPNMLKGITERLKSRFAHGIIADITPPQLDTKIAIIRKKCEFNDINLSNDIINYIATSLGDNIREIEGIIISLNAYATILGQEITLELAKSVMKDHIKEKKENITIDDILSLVCKEFNIKPSDVKSNKKTQNIVTARRIVIYLARALTALTMPQLANYFEMKDHTAISHNVKKITEMIENDASLKAKIEELKNKILVKSQS</sequence>
<gene>
    <name evidence="1" type="primary">dnaA</name>
    <name type="ordered locus">CJJ81176_0027</name>
</gene>
<keyword id="KW-0067">ATP-binding</keyword>
<keyword id="KW-0963">Cytoplasm</keyword>
<keyword id="KW-0235">DNA replication</keyword>
<keyword id="KW-0238">DNA-binding</keyword>
<keyword id="KW-0446">Lipid-binding</keyword>
<keyword id="KW-0547">Nucleotide-binding</keyword>
<evidence type="ECO:0000255" key="1">
    <source>
        <dbReference type="HAMAP-Rule" id="MF_00377"/>
    </source>
</evidence>
<feature type="chain" id="PRO_1000048629" description="Chromosomal replication initiator protein DnaA">
    <location>
        <begin position="1"/>
        <end position="440"/>
    </location>
</feature>
<feature type="region of interest" description="Domain I, interacts with DnaA modulators" evidence="1">
    <location>
        <begin position="1"/>
        <end position="74"/>
    </location>
</feature>
<feature type="region of interest" description="Domain II" evidence="1">
    <location>
        <begin position="74"/>
        <end position="99"/>
    </location>
</feature>
<feature type="region of interest" description="Domain III, AAA+ region" evidence="1">
    <location>
        <begin position="100"/>
        <end position="316"/>
    </location>
</feature>
<feature type="region of interest" description="Domain IV, binds dsDNA" evidence="1">
    <location>
        <begin position="317"/>
        <end position="440"/>
    </location>
</feature>
<feature type="binding site" evidence="1">
    <location>
        <position position="146"/>
    </location>
    <ligand>
        <name>ATP</name>
        <dbReference type="ChEBI" id="CHEBI:30616"/>
    </ligand>
</feature>
<feature type="binding site" evidence="1">
    <location>
        <position position="148"/>
    </location>
    <ligand>
        <name>ATP</name>
        <dbReference type="ChEBI" id="CHEBI:30616"/>
    </ligand>
</feature>
<feature type="binding site" evidence="1">
    <location>
        <position position="149"/>
    </location>
    <ligand>
        <name>ATP</name>
        <dbReference type="ChEBI" id="CHEBI:30616"/>
    </ligand>
</feature>
<feature type="binding site" evidence="1">
    <location>
        <position position="150"/>
    </location>
    <ligand>
        <name>ATP</name>
        <dbReference type="ChEBI" id="CHEBI:30616"/>
    </ligand>
</feature>
<protein>
    <recommendedName>
        <fullName evidence="1">Chromosomal replication initiator protein DnaA</fullName>
    </recommendedName>
</protein>
<comment type="function">
    <text evidence="1">Plays an essential role in the initiation and regulation of chromosomal replication. ATP-DnaA binds to the origin of replication (oriC) to initiate formation of the DNA replication initiation complex once per cell cycle. Binds the DnaA box (a 9 base pair repeat at the origin) and separates the double-stranded (ds)DNA. Forms a right-handed helical filament on oriC DNA; dsDNA binds to the exterior of the filament while single-stranded (ss)DNA is stabiized in the filament's interior. The ATP-DnaA-oriC complex binds and stabilizes one strand of the AT-rich DNA unwinding element (DUE), permitting loading of DNA polymerase. After initiation quickly degrades to an ADP-DnaA complex that is not apt for DNA replication. Binds acidic phospholipids.</text>
</comment>
<comment type="subunit">
    <text evidence="1">Oligomerizes as a right-handed, spiral filament on DNA at oriC.</text>
</comment>
<comment type="subcellular location">
    <subcellularLocation>
        <location evidence="1">Cytoplasm</location>
    </subcellularLocation>
</comment>
<comment type="domain">
    <text evidence="1">Domain I is involved in oligomerization and binding regulators, domain II is flexibile and of varying length in different bacteria, domain III forms the AAA+ region, while domain IV binds dsDNA.</text>
</comment>
<comment type="similarity">
    <text evidence="1">Belongs to the DnaA family.</text>
</comment>
<proteinExistence type="inferred from homology"/>
<dbReference type="EMBL" id="CP000538">
    <property type="protein sequence ID" value="EAQ71949.1"/>
    <property type="molecule type" value="Genomic_DNA"/>
</dbReference>
<dbReference type="RefSeq" id="WP_002860145.1">
    <property type="nucleotide sequence ID" value="NC_008787.1"/>
</dbReference>
<dbReference type="SMR" id="A1VX79"/>
<dbReference type="KEGG" id="cjj:CJJ81176_0027"/>
<dbReference type="eggNOG" id="COG0593">
    <property type="taxonomic scope" value="Bacteria"/>
</dbReference>
<dbReference type="HOGENOM" id="CLU_026910_3_1_7"/>
<dbReference type="Proteomes" id="UP000000646">
    <property type="component" value="Chromosome"/>
</dbReference>
<dbReference type="GO" id="GO:0005737">
    <property type="term" value="C:cytoplasm"/>
    <property type="evidence" value="ECO:0007669"/>
    <property type="project" value="UniProtKB-SubCell"/>
</dbReference>
<dbReference type="GO" id="GO:0005886">
    <property type="term" value="C:plasma membrane"/>
    <property type="evidence" value="ECO:0007669"/>
    <property type="project" value="TreeGrafter"/>
</dbReference>
<dbReference type="GO" id="GO:0005524">
    <property type="term" value="F:ATP binding"/>
    <property type="evidence" value="ECO:0007669"/>
    <property type="project" value="UniProtKB-UniRule"/>
</dbReference>
<dbReference type="GO" id="GO:0016887">
    <property type="term" value="F:ATP hydrolysis activity"/>
    <property type="evidence" value="ECO:0007669"/>
    <property type="project" value="InterPro"/>
</dbReference>
<dbReference type="GO" id="GO:0003688">
    <property type="term" value="F:DNA replication origin binding"/>
    <property type="evidence" value="ECO:0007669"/>
    <property type="project" value="UniProtKB-UniRule"/>
</dbReference>
<dbReference type="GO" id="GO:0008289">
    <property type="term" value="F:lipid binding"/>
    <property type="evidence" value="ECO:0007669"/>
    <property type="project" value="UniProtKB-KW"/>
</dbReference>
<dbReference type="GO" id="GO:0006270">
    <property type="term" value="P:DNA replication initiation"/>
    <property type="evidence" value="ECO:0007669"/>
    <property type="project" value="UniProtKB-UniRule"/>
</dbReference>
<dbReference type="GO" id="GO:0006275">
    <property type="term" value="P:regulation of DNA replication"/>
    <property type="evidence" value="ECO:0007669"/>
    <property type="project" value="UniProtKB-UniRule"/>
</dbReference>
<dbReference type="CDD" id="cd00009">
    <property type="entry name" value="AAA"/>
    <property type="match status" value="1"/>
</dbReference>
<dbReference type="CDD" id="cd06571">
    <property type="entry name" value="Bac_DnaA_C"/>
    <property type="match status" value="1"/>
</dbReference>
<dbReference type="Gene3D" id="1.10.1750.10">
    <property type="match status" value="1"/>
</dbReference>
<dbReference type="Gene3D" id="1.10.8.60">
    <property type="match status" value="1"/>
</dbReference>
<dbReference type="Gene3D" id="3.30.300.180">
    <property type="match status" value="1"/>
</dbReference>
<dbReference type="Gene3D" id="3.40.50.300">
    <property type="entry name" value="P-loop containing nucleotide triphosphate hydrolases"/>
    <property type="match status" value="1"/>
</dbReference>
<dbReference type="HAMAP" id="MF_00377">
    <property type="entry name" value="DnaA_bact"/>
    <property type="match status" value="1"/>
</dbReference>
<dbReference type="InterPro" id="IPR003593">
    <property type="entry name" value="AAA+_ATPase"/>
</dbReference>
<dbReference type="InterPro" id="IPR001957">
    <property type="entry name" value="Chromosome_initiator_DnaA"/>
</dbReference>
<dbReference type="InterPro" id="IPR020591">
    <property type="entry name" value="Chromosome_initiator_DnaA-like"/>
</dbReference>
<dbReference type="InterPro" id="IPR018312">
    <property type="entry name" value="Chromosome_initiator_DnaA_CS"/>
</dbReference>
<dbReference type="InterPro" id="IPR013159">
    <property type="entry name" value="DnaA_C"/>
</dbReference>
<dbReference type="InterPro" id="IPR013317">
    <property type="entry name" value="DnaA_dom"/>
</dbReference>
<dbReference type="InterPro" id="IPR024633">
    <property type="entry name" value="DnaA_N_dom"/>
</dbReference>
<dbReference type="InterPro" id="IPR038454">
    <property type="entry name" value="DnaA_N_sf"/>
</dbReference>
<dbReference type="InterPro" id="IPR027417">
    <property type="entry name" value="P-loop_NTPase"/>
</dbReference>
<dbReference type="InterPro" id="IPR010921">
    <property type="entry name" value="Trp_repressor/repl_initiator"/>
</dbReference>
<dbReference type="NCBIfam" id="TIGR00362">
    <property type="entry name" value="DnaA"/>
    <property type="match status" value="1"/>
</dbReference>
<dbReference type="PANTHER" id="PTHR30050">
    <property type="entry name" value="CHROMOSOMAL REPLICATION INITIATOR PROTEIN DNAA"/>
    <property type="match status" value="1"/>
</dbReference>
<dbReference type="PANTHER" id="PTHR30050:SF2">
    <property type="entry name" value="CHROMOSOMAL REPLICATION INITIATOR PROTEIN DNAA"/>
    <property type="match status" value="1"/>
</dbReference>
<dbReference type="Pfam" id="PF00308">
    <property type="entry name" value="Bac_DnaA"/>
    <property type="match status" value="1"/>
</dbReference>
<dbReference type="Pfam" id="PF08299">
    <property type="entry name" value="Bac_DnaA_C"/>
    <property type="match status" value="1"/>
</dbReference>
<dbReference type="Pfam" id="PF11638">
    <property type="entry name" value="DnaA_N"/>
    <property type="match status" value="1"/>
</dbReference>
<dbReference type="PRINTS" id="PR00051">
    <property type="entry name" value="DNAA"/>
</dbReference>
<dbReference type="SMART" id="SM00382">
    <property type="entry name" value="AAA"/>
    <property type="match status" value="1"/>
</dbReference>
<dbReference type="SMART" id="SM00760">
    <property type="entry name" value="Bac_DnaA_C"/>
    <property type="match status" value="1"/>
</dbReference>
<dbReference type="SUPFAM" id="SSF52540">
    <property type="entry name" value="P-loop containing nucleoside triphosphate hydrolases"/>
    <property type="match status" value="1"/>
</dbReference>
<dbReference type="SUPFAM" id="SSF48295">
    <property type="entry name" value="TrpR-like"/>
    <property type="match status" value="1"/>
</dbReference>
<dbReference type="PROSITE" id="PS01008">
    <property type="entry name" value="DNAA"/>
    <property type="match status" value="1"/>
</dbReference>
<reference key="1">
    <citation type="submission" date="2006-12" db="EMBL/GenBank/DDBJ databases">
        <authorList>
            <person name="Fouts D.E."/>
            <person name="Nelson K.E."/>
            <person name="Sebastian Y."/>
        </authorList>
    </citation>
    <scope>NUCLEOTIDE SEQUENCE [LARGE SCALE GENOMIC DNA]</scope>
    <source>
        <strain>81-176</strain>
    </source>
</reference>